<sequence length="466" mass="52495">MSVVPVADVLQGRVAVDSEVTVRGWVRTRRDSKAGFSFLAVYDGSCFDPVQAVINNSLPNYNQEVLRLTTGCSVIVTGKVVASQGQGQSFEIQATSVEVTGWVEDPDTYPMAAKRHSIEYLREVAHLRPRTNLIGAVARVRHTLAQALHRFFNEQGFFWVSTPLITASDTEGAGEMFRVSTLDLENLPRNDQGKVDFDKDFFGKESFLTVSGQLNGETYACALSKIYTFGPTFRAENSNTSRHLAEFWMLEPEVAFANLNDVAGLAEAMLKYVFKAVLEERADDMQFFAERVDKDAIDRLQRFITADFAQVDYTDAVTILENCGKQFENPVYWGVDLSSEHERYLAEEHFKAPVVVKNYPKDIKAFYMRLNEDGKTVAAMDVLAPGIGEIIGGSQREERLDVLDARMAEMGLNKEDYWWYRDLRRYGTVPHSGFGLGFERLIAYVTGVQNVRDVIPFPRTPRNATF</sequence>
<organism>
    <name type="scientific">Klebsiella pneumoniae subsp. pneumoniae (strain ATCC 700721 / MGH 78578)</name>
    <dbReference type="NCBI Taxonomy" id="272620"/>
    <lineage>
        <taxon>Bacteria</taxon>
        <taxon>Pseudomonadati</taxon>
        <taxon>Pseudomonadota</taxon>
        <taxon>Gammaproteobacteria</taxon>
        <taxon>Enterobacterales</taxon>
        <taxon>Enterobacteriaceae</taxon>
        <taxon>Klebsiella/Raoultella group</taxon>
        <taxon>Klebsiella</taxon>
        <taxon>Klebsiella pneumoniae complex</taxon>
    </lineage>
</organism>
<protein>
    <recommendedName>
        <fullName evidence="1">Asparagine--tRNA ligase</fullName>
        <ecNumber evidence="1">6.1.1.22</ecNumber>
    </recommendedName>
    <alternativeName>
        <fullName evidence="1">Asparaginyl-tRNA synthetase</fullName>
        <shortName evidence="1">AsnRS</shortName>
    </alternativeName>
</protein>
<proteinExistence type="inferred from homology"/>
<name>SYN_KLEP7</name>
<dbReference type="EC" id="6.1.1.22" evidence="1"/>
<dbReference type="EMBL" id="CP000647">
    <property type="protein sequence ID" value="ABR76397.1"/>
    <property type="molecule type" value="Genomic_DNA"/>
</dbReference>
<dbReference type="RefSeq" id="WP_002898206.1">
    <property type="nucleotide sequence ID" value="NC_009648.1"/>
</dbReference>
<dbReference type="SMR" id="A6T726"/>
<dbReference type="STRING" id="272620.KPN_00961"/>
<dbReference type="jPOST" id="A6T726"/>
<dbReference type="PaxDb" id="272620-KPN_00961"/>
<dbReference type="EnsemblBacteria" id="ABR76397">
    <property type="protein sequence ID" value="ABR76397"/>
    <property type="gene ID" value="KPN_00961"/>
</dbReference>
<dbReference type="KEGG" id="kpn:KPN_00961"/>
<dbReference type="HOGENOM" id="CLU_004553_2_0_6"/>
<dbReference type="Proteomes" id="UP000000265">
    <property type="component" value="Chromosome"/>
</dbReference>
<dbReference type="GO" id="GO:0005737">
    <property type="term" value="C:cytoplasm"/>
    <property type="evidence" value="ECO:0007669"/>
    <property type="project" value="UniProtKB-SubCell"/>
</dbReference>
<dbReference type="GO" id="GO:0004816">
    <property type="term" value="F:asparagine-tRNA ligase activity"/>
    <property type="evidence" value="ECO:0007669"/>
    <property type="project" value="UniProtKB-UniRule"/>
</dbReference>
<dbReference type="GO" id="GO:0005524">
    <property type="term" value="F:ATP binding"/>
    <property type="evidence" value="ECO:0007669"/>
    <property type="project" value="UniProtKB-UniRule"/>
</dbReference>
<dbReference type="GO" id="GO:0003676">
    <property type="term" value="F:nucleic acid binding"/>
    <property type="evidence" value="ECO:0007669"/>
    <property type="project" value="InterPro"/>
</dbReference>
<dbReference type="GO" id="GO:0006421">
    <property type="term" value="P:asparaginyl-tRNA aminoacylation"/>
    <property type="evidence" value="ECO:0007669"/>
    <property type="project" value="UniProtKB-UniRule"/>
</dbReference>
<dbReference type="CDD" id="cd00776">
    <property type="entry name" value="AsxRS_core"/>
    <property type="match status" value="1"/>
</dbReference>
<dbReference type="CDD" id="cd04318">
    <property type="entry name" value="EcAsnRS_like_N"/>
    <property type="match status" value="1"/>
</dbReference>
<dbReference type="FunFam" id="2.40.50.140:FF:000116">
    <property type="entry name" value="Asparagine--tRNA ligase"/>
    <property type="match status" value="1"/>
</dbReference>
<dbReference type="FunFam" id="3.30.930.10:FF:000016">
    <property type="entry name" value="Asparagine--tRNA ligase"/>
    <property type="match status" value="1"/>
</dbReference>
<dbReference type="Gene3D" id="3.30.930.10">
    <property type="entry name" value="Bira Bifunctional Protein, Domain 2"/>
    <property type="match status" value="1"/>
</dbReference>
<dbReference type="Gene3D" id="2.40.50.140">
    <property type="entry name" value="Nucleic acid-binding proteins"/>
    <property type="match status" value="1"/>
</dbReference>
<dbReference type="HAMAP" id="MF_00534">
    <property type="entry name" value="Asn_tRNA_synth"/>
    <property type="match status" value="1"/>
</dbReference>
<dbReference type="InterPro" id="IPR004364">
    <property type="entry name" value="Aa-tRNA-synt_II"/>
</dbReference>
<dbReference type="InterPro" id="IPR006195">
    <property type="entry name" value="aa-tRNA-synth_II"/>
</dbReference>
<dbReference type="InterPro" id="IPR045864">
    <property type="entry name" value="aa-tRNA-synth_II/BPL/LPL"/>
</dbReference>
<dbReference type="InterPro" id="IPR004522">
    <property type="entry name" value="Asn-tRNA-ligase"/>
</dbReference>
<dbReference type="InterPro" id="IPR002312">
    <property type="entry name" value="Asp/Asn-tRNA-synth_IIb"/>
</dbReference>
<dbReference type="InterPro" id="IPR012340">
    <property type="entry name" value="NA-bd_OB-fold"/>
</dbReference>
<dbReference type="InterPro" id="IPR004365">
    <property type="entry name" value="NA-bd_OB_tRNA"/>
</dbReference>
<dbReference type="NCBIfam" id="TIGR00457">
    <property type="entry name" value="asnS"/>
    <property type="match status" value="1"/>
</dbReference>
<dbReference type="NCBIfam" id="NF003037">
    <property type="entry name" value="PRK03932.1"/>
    <property type="match status" value="1"/>
</dbReference>
<dbReference type="PANTHER" id="PTHR22594:SF34">
    <property type="entry name" value="ASPARAGINE--TRNA LIGASE, MITOCHONDRIAL-RELATED"/>
    <property type="match status" value="1"/>
</dbReference>
<dbReference type="PANTHER" id="PTHR22594">
    <property type="entry name" value="ASPARTYL/LYSYL-TRNA SYNTHETASE"/>
    <property type="match status" value="1"/>
</dbReference>
<dbReference type="Pfam" id="PF00152">
    <property type="entry name" value="tRNA-synt_2"/>
    <property type="match status" value="1"/>
</dbReference>
<dbReference type="Pfam" id="PF01336">
    <property type="entry name" value="tRNA_anti-codon"/>
    <property type="match status" value="1"/>
</dbReference>
<dbReference type="PRINTS" id="PR01042">
    <property type="entry name" value="TRNASYNTHASP"/>
</dbReference>
<dbReference type="SUPFAM" id="SSF55681">
    <property type="entry name" value="Class II aaRS and biotin synthetases"/>
    <property type="match status" value="1"/>
</dbReference>
<dbReference type="SUPFAM" id="SSF50249">
    <property type="entry name" value="Nucleic acid-binding proteins"/>
    <property type="match status" value="1"/>
</dbReference>
<dbReference type="PROSITE" id="PS50862">
    <property type="entry name" value="AA_TRNA_LIGASE_II"/>
    <property type="match status" value="1"/>
</dbReference>
<comment type="catalytic activity">
    <reaction evidence="1">
        <text>tRNA(Asn) + L-asparagine + ATP = L-asparaginyl-tRNA(Asn) + AMP + diphosphate + H(+)</text>
        <dbReference type="Rhea" id="RHEA:11180"/>
        <dbReference type="Rhea" id="RHEA-COMP:9659"/>
        <dbReference type="Rhea" id="RHEA-COMP:9674"/>
        <dbReference type="ChEBI" id="CHEBI:15378"/>
        <dbReference type="ChEBI" id="CHEBI:30616"/>
        <dbReference type="ChEBI" id="CHEBI:33019"/>
        <dbReference type="ChEBI" id="CHEBI:58048"/>
        <dbReference type="ChEBI" id="CHEBI:78442"/>
        <dbReference type="ChEBI" id="CHEBI:78515"/>
        <dbReference type="ChEBI" id="CHEBI:456215"/>
        <dbReference type="EC" id="6.1.1.22"/>
    </reaction>
</comment>
<comment type="subunit">
    <text evidence="1">Homodimer.</text>
</comment>
<comment type="subcellular location">
    <subcellularLocation>
        <location evidence="1">Cytoplasm</location>
    </subcellularLocation>
</comment>
<comment type="similarity">
    <text evidence="1">Belongs to the class-II aminoacyl-tRNA synthetase family.</text>
</comment>
<feature type="chain" id="PRO_1000051401" description="Asparagine--tRNA ligase">
    <location>
        <begin position="1"/>
        <end position="466"/>
    </location>
</feature>
<accession>A6T726</accession>
<keyword id="KW-0030">Aminoacyl-tRNA synthetase</keyword>
<keyword id="KW-0067">ATP-binding</keyword>
<keyword id="KW-0963">Cytoplasm</keyword>
<keyword id="KW-0436">Ligase</keyword>
<keyword id="KW-0547">Nucleotide-binding</keyword>
<keyword id="KW-0648">Protein biosynthesis</keyword>
<reference key="1">
    <citation type="submission" date="2006-09" db="EMBL/GenBank/DDBJ databases">
        <authorList>
            <consortium name="The Klebsiella pneumonia Genome Sequencing Project"/>
            <person name="McClelland M."/>
            <person name="Sanderson E.K."/>
            <person name="Spieth J."/>
            <person name="Clifton W.S."/>
            <person name="Latreille P."/>
            <person name="Sabo A."/>
            <person name="Pepin K."/>
            <person name="Bhonagiri V."/>
            <person name="Porwollik S."/>
            <person name="Ali J."/>
            <person name="Wilson R.K."/>
        </authorList>
    </citation>
    <scope>NUCLEOTIDE SEQUENCE [LARGE SCALE GENOMIC DNA]</scope>
    <source>
        <strain>ATCC 700721 / MGH 78578</strain>
    </source>
</reference>
<gene>
    <name evidence="1" type="primary">asnS</name>
    <name type="ordered locus">KPN78578_09360</name>
    <name type="ORF">KPN_00961</name>
</gene>
<evidence type="ECO:0000255" key="1">
    <source>
        <dbReference type="HAMAP-Rule" id="MF_00534"/>
    </source>
</evidence>